<gene>
    <name evidence="1" type="primary">rplN</name>
    <name type="ordered locus">BamMC406_0286</name>
</gene>
<name>RL14_BURA4</name>
<comment type="function">
    <text evidence="1">Binds to 23S rRNA. Forms part of two intersubunit bridges in the 70S ribosome.</text>
</comment>
<comment type="subunit">
    <text evidence="1">Part of the 50S ribosomal subunit. Forms a cluster with proteins L3 and L19. In the 70S ribosome, L14 and L19 interact and together make contacts with the 16S rRNA in bridges B5 and B8.</text>
</comment>
<comment type="similarity">
    <text evidence="1">Belongs to the universal ribosomal protein uL14 family.</text>
</comment>
<reference key="1">
    <citation type="submission" date="2008-04" db="EMBL/GenBank/DDBJ databases">
        <title>Complete sequence of chromosome 1 of Burkholderia ambifaria MC40-6.</title>
        <authorList>
            <person name="Copeland A."/>
            <person name="Lucas S."/>
            <person name="Lapidus A."/>
            <person name="Glavina del Rio T."/>
            <person name="Dalin E."/>
            <person name="Tice H."/>
            <person name="Pitluck S."/>
            <person name="Chain P."/>
            <person name="Malfatti S."/>
            <person name="Shin M."/>
            <person name="Vergez L."/>
            <person name="Lang D."/>
            <person name="Schmutz J."/>
            <person name="Larimer F."/>
            <person name="Land M."/>
            <person name="Hauser L."/>
            <person name="Kyrpides N."/>
            <person name="Lykidis A."/>
            <person name="Ramette A."/>
            <person name="Konstantinidis K."/>
            <person name="Tiedje J."/>
            <person name="Richardson P."/>
        </authorList>
    </citation>
    <scope>NUCLEOTIDE SEQUENCE [LARGE SCALE GENOMIC DNA]</scope>
    <source>
        <strain>MC40-6</strain>
    </source>
</reference>
<dbReference type="EMBL" id="CP001025">
    <property type="protein sequence ID" value="ACB62787.1"/>
    <property type="molecule type" value="Genomic_DNA"/>
</dbReference>
<dbReference type="RefSeq" id="WP_006752929.1">
    <property type="nucleotide sequence ID" value="NC_010551.1"/>
</dbReference>
<dbReference type="SMR" id="B1YRN9"/>
<dbReference type="GeneID" id="98107150"/>
<dbReference type="KEGG" id="bac:BamMC406_0286"/>
<dbReference type="HOGENOM" id="CLU_095071_2_1_4"/>
<dbReference type="OrthoDB" id="9806379at2"/>
<dbReference type="Proteomes" id="UP000001680">
    <property type="component" value="Chromosome 1"/>
</dbReference>
<dbReference type="GO" id="GO:0022625">
    <property type="term" value="C:cytosolic large ribosomal subunit"/>
    <property type="evidence" value="ECO:0007669"/>
    <property type="project" value="TreeGrafter"/>
</dbReference>
<dbReference type="GO" id="GO:0070180">
    <property type="term" value="F:large ribosomal subunit rRNA binding"/>
    <property type="evidence" value="ECO:0007669"/>
    <property type="project" value="TreeGrafter"/>
</dbReference>
<dbReference type="GO" id="GO:0003735">
    <property type="term" value="F:structural constituent of ribosome"/>
    <property type="evidence" value="ECO:0007669"/>
    <property type="project" value="InterPro"/>
</dbReference>
<dbReference type="GO" id="GO:0006412">
    <property type="term" value="P:translation"/>
    <property type="evidence" value="ECO:0007669"/>
    <property type="project" value="UniProtKB-UniRule"/>
</dbReference>
<dbReference type="CDD" id="cd00337">
    <property type="entry name" value="Ribosomal_uL14"/>
    <property type="match status" value="1"/>
</dbReference>
<dbReference type="FunFam" id="2.40.150.20:FF:000001">
    <property type="entry name" value="50S ribosomal protein L14"/>
    <property type="match status" value="1"/>
</dbReference>
<dbReference type="Gene3D" id="2.40.150.20">
    <property type="entry name" value="Ribosomal protein L14"/>
    <property type="match status" value="1"/>
</dbReference>
<dbReference type="HAMAP" id="MF_01367">
    <property type="entry name" value="Ribosomal_uL14"/>
    <property type="match status" value="1"/>
</dbReference>
<dbReference type="InterPro" id="IPR000218">
    <property type="entry name" value="Ribosomal_uL14"/>
</dbReference>
<dbReference type="InterPro" id="IPR005745">
    <property type="entry name" value="Ribosomal_uL14_bac-type"/>
</dbReference>
<dbReference type="InterPro" id="IPR019972">
    <property type="entry name" value="Ribosomal_uL14_CS"/>
</dbReference>
<dbReference type="InterPro" id="IPR036853">
    <property type="entry name" value="Ribosomal_uL14_sf"/>
</dbReference>
<dbReference type="NCBIfam" id="TIGR01067">
    <property type="entry name" value="rplN_bact"/>
    <property type="match status" value="1"/>
</dbReference>
<dbReference type="PANTHER" id="PTHR11761">
    <property type="entry name" value="50S/60S RIBOSOMAL PROTEIN L14/L23"/>
    <property type="match status" value="1"/>
</dbReference>
<dbReference type="PANTHER" id="PTHR11761:SF3">
    <property type="entry name" value="LARGE RIBOSOMAL SUBUNIT PROTEIN UL14M"/>
    <property type="match status" value="1"/>
</dbReference>
<dbReference type="Pfam" id="PF00238">
    <property type="entry name" value="Ribosomal_L14"/>
    <property type="match status" value="1"/>
</dbReference>
<dbReference type="SMART" id="SM01374">
    <property type="entry name" value="Ribosomal_L14"/>
    <property type="match status" value="1"/>
</dbReference>
<dbReference type="SUPFAM" id="SSF50193">
    <property type="entry name" value="Ribosomal protein L14"/>
    <property type="match status" value="1"/>
</dbReference>
<dbReference type="PROSITE" id="PS00049">
    <property type="entry name" value="RIBOSOMAL_L14"/>
    <property type="match status" value="1"/>
</dbReference>
<sequence>MIQTESRLEVADNTGAREVMCIKVLGGSKRRYAGIGDIIKVTVKEATPRGRVKKGEIYNAVVVRTAKGVRRQDGSLIKFDGNAAVLLNNKLEPIGTRIFGPVTRELRSERFMKIVSLAPEVL</sequence>
<proteinExistence type="inferred from homology"/>
<organism>
    <name type="scientific">Burkholderia ambifaria (strain MC40-6)</name>
    <dbReference type="NCBI Taxonomy" id="398577"/>
    <lineage>
        <taxon>Bacteria</taxon>
        <taxon>Pseudomonadati</taxon>
        <taxon>Pseudomonadota</taxon>
        <taxon>Betaproteobacteria</taxon>
        <taxon>Burkholderiales</taxon>
        <taxon>Burkholderiaceae</taxon>
        <taxon>Burkholderia</taxon>
        <taxon>Burkholderia cepacia complex</taxon>
    </lineage>
</organism>
<accession>B1YRN9</accession>
<protein>
    <recommendedName>
        <fullName evidence="1">Large ribosomal subunit protein uL14</fullName>
    </recommendedName>
    <alternativeName>
        <fullName evidence="2">50S ribosomal protein L14</fullName>
    </alternativeName>
</protein>
<keyword id="KW-0687">Ribonucleoprotein</keyword>
<keyword id="KW-0689">Ribosomal protein</keyword>
<keyword id="KW-0694">RNA-binding</keyword>
<keyword id="KW-0699">rRNA-binding</keyword>
<evidence type="ECO:0000255" key="1">
    <source>
        <dbReference type="HAMAP-Rule" id="MF_01367"/>
    </source>
</evidence>
<evidence type="ECO:0000305" key="2"/>
<feature type="chain" id="PRO_1000144232" description="Large ribosomal subunit protein uL14">
    <location>
        <begin position="1"/>
        <end position="122"/>
    </location>
</feature>